<reference key="1">
    <citation type="journal article" date="1991" name="Proc. Natl. Acad. Sci. U.S.A.">
        <title>Expression of GATA-binding proteins during embryonic development in Xenopus laevis.</title>
        <authorList>
            <person name="Zon L.I."/>
            <person name="Mather C."/>
            <person name="Burgess S."/>
            <person name="Bolce M.E."/>
            <person name="Harland R.M."/>
            <person name="Orkin S.H."/>
        </authorList>
    </citation>
    <scope>NUCLEOTIDE SEQUENCE [MRNA]</scope>
    <scope>TISSUE SPECIFICITY</scope>
    <scope>DEVELOPMENTAL STAGE</scope>
    <source>
        <tissue>Neurula</tissue>
    </source>
</reference>
<sequence>MEVATDQPRWMAHHAVLNGQHPDSHHPGLAHNYMEPTQLLPPDEVDVFFNHLDSQGNPYYANSAHARARVSYSQAHARLTGSQMCRPHLLHSPGLPWLESGKTALSAAHHHNPWTVSPFGKAPLHPAARGGSLYPGTGSSACPSSSHSSPHLFGFPPTPPKDVSPDPGPASPPSSSRLEDKDSIKYQMSLSEGMKMEGGSPLRSSLAPMGTQCSTHHPIPTYPSYVPAAHDYSSGLFHPGSLLGGPASSFTPKQRSKSRSCSEGRECVNCGATATPLWRRDGTGHYLCNACGLYHKMNGQNRPLIKPKRRLSAARRAGTCCANCQTSTTTLWRRNANGDPVCNACGLYYKLHNVNRPLTMKKEGIQTRNRKMSNKSKKNKKGSECFEELSRCMQEKSSPFSAAALASHMAPMGHLAPFSHSGHILQTPTPIHPSSSLSFGHPHHSSMVTAMG</sequence>
<gene>
    <name type="primary">gata2</name>
</gene>
<organism>
    <name type="scientific">Xenopus laevis</name>
    <name type="common">African clawed frog</name>
    <dbReference type="NCBI Taxonomy" id="8355"/>
    <lineage>
        <taxon>Eukaryota</taxon>
        <taxon>Metazoa</taxon>
        <taxon>Chordata</taxon>
        <taxon>Craniata</taxon>
        <taxon>Vertebrata</taxon>
        <taxon>Euteleostomi</taxon>
        <taxon>Amphibia</taxon>
        <taxon>Batrachia</taxon>
        <taxon>Anura</taxon>
        <taxon>Pipoidea</taxon>
        <taxon>Pipidae</taxon>
        <taxon>Xenopodinae</taxon>
        <taxon>Xenopus</taxon>
        <taxon>Xenopus</taxon>
    </lineage>
</organism>
<accession>P23770</accession>
<dbReference type="EMBL" id="M76564">
    <property type="protein sequence ID" value="AAA49723.1"/>
    <property type="molecule type" value="mRNA"/>
</dbReference>
<dbReference type="PIR" id="C41602">
    <property type="entry name" value="C41602"/>
</dbReference>
<dbReference type="SMR" id="P23770"/>
<dbReference type="AGR" id="Xenbase:XB-GENE-865147"/>
<dbReference type="Xenbase" id="XB-GENE-865147">
    <property type="gene designation" value="gata2.L"/>
</dbReference>
<dbReference type="Proteomes" id="UP000186698">
    <property type="component" value="Unplaced"/>
</dbReference>
<dbReference type="GO" id="GO:0005634">
    <property type="term" value="C:nucleus"/>
    <property type="evidence" value="ECO:0000318"/>
    <property type="project" value="GO_Central"/>
</dbReference>
<dbReference type="GO" id="GO:0000981">
    <property type="term" value="F:DNA-binding transcription factor activity, RNA polymerase II-specific"/>
    <property type="evidence" value="ECO:0000318"/>
    <property type="project" value="GO_Central"/>
</dbReference>
<dbReference type="GO" id="GO:0000978">
    <property type="term" value="F:RNA polymerase II cis-regulatory region sequence-specific DNA binding"/>
    <property type="evidence" value="ECO:0000318"/>
    <property type="project" value="GO_Central"/>
</dbReference>
<dbReference type="GO" id="GO:0008270">
    <property type="term" value="F:zinc ion binding"/>
    <property type="evidence" value="ECO:0007669"/>
    <property type="project" value="UniProtKB-KW"/>
</dbReference>
<dbReference type="GO" id="GO:0045165">
    <property type="term" value="P:cell fate commitment"/>
    <property type="evidence" value="ECO:0000318"/>
    <property type="project" value="GO_Central"/>
</dbReference>
<dbReference type="GO" id="GO:0000122">
    <property type="term" value="P:negative regulation of transcription by RNA polymerase II"/>
    <property type="evidence" value="ECO:0000318"/>
    <property type="project" value="GO_Central"/>
</dbReference>
<dbReference type="GO" id="GO:0045766">
    <property type="term" value="P:positive regulation of angiogenesis"/>
    <property type="evidence" value="ECO:0000318"/>
    <property type="project" value="GO_Central"/>
</dbReference>
<dbReference type="GO" id="GO:1902895">
    <property type="term" value="P:positive regulation of miRNA transcription"/>
    <property type="evidence" value="ECO:0000318"/>
    <property type="project" value="GO_Central"/>
</dbReference>
<dbReference type="GO" id="GO:0045944">
    <property type="term" value="P:positive regulation of transcription by RNA polymerase II"/>
    <property type="evidence" value="ECO:0000318"/>
    <property type="project" value="GO_Central"/>
</dbReference>
<dbReference type="CDD" id="cd00202">
    <property type="entry name" value="ZnF_GATA"/>
    <property type="match status" value="2"/>
</dbReference>
<dbReference type="FunFam" id="3.30.50.10:FF:000001">
    <property type="entry name" value="GATA transcription factor (GATAd)"/>
    <property type="match status" value="1"/>
</dbReference>
<dbReference type="FunFam" id="3.30.50.10:FF:000032">
    <property type="entry name" value="Transcription factor GATA-3"/>
    <property type="match status" value="1"/>
</dbReference>
<dbReference type="Gene3D" id="3.30.50.10">
    <property type="entry name" value="Erythroid Transcription Factor GATA-1, subunit A"/>
    <property type="match status" value="2"/>
</dbReference>
<dbReference type="InterPro" id="IPR016374">
    <property type="entry name" value="TF_GATA-2/3"/>
</dbReference>
<dbReference type="InterPro" id="IPR039355">
    <property type="entry name" value="Transcription_factor_GATA"/>
</dbReference>
<dbReference type="InterPro" id="IPR000679">
    <property type="entry name" value="Znf_GATA"/>
</dbReference>
<dbReference type="InterPro" id="IPR013088">
    <property type="entry name" value="Znf_NHR/GATA"/>
</dbReference>
<dbReference type="PANTHER" id="PTHR10071:SF149">
    <property type="entry name" value="ENDOTHELIAL TRANSCRIPTION FACTOR GATA-2"/>
    <property type="match status" value="1"/>
</dbReference>
<dbReference type="PANTHER" id="PTHR10071">
    <property type="entry name" value="TRANSCRIPTION FACTOR GATA FAMILY MEMBER"/>
    <property type="match status" value="1"/>
</dbReference>
<dbReference type="Pfam" id="PF00320">
    <property type="entry name" value="GATA"/>
    <property type="match status" value="2"/>
</dbReference>
<dbReference type="PIRSF" id="PIRSF003027">
    <property type="entry name" value="TF_GATA-1/2/3"/>
    <property type="match status" value="1"/>
</dbReference>
<dbReference type="PRINTS" id="PR00619">
    <property type="entry name" value="GATAZNFINGER"/>
</dbReference>
<dbReference type="SMART" id="SM00401">
    <property type="entry name" value="ZnF_GATA"/>
    <property type="match status" value="2"/>
</dbReference>
<dbReference type="SUPFAM" id="SSF57716">
    <property type="entry name" value="Glucocorticoid receptor-like (DNA-binding domain)"/>
    <property type="match status" value="2"/>
</dbReference>
<dbReference type="PROSITE" id="PS00344">
    <property type="entry name" value="GATA_ZN_FINGER_1"/>
    <property type="match status" value="2"/>
</dbReference>
<dbReference type="PROSITE" id="PS50114">
    <property type="entry name" value="GATA_ZN_FINGER_2"/>
    <property type="match status" value="2"/>
</dbReference>
<proteinExistence type="evidence at transcript level"/>
<name>GATA2_XENLA</name>
<feature type="chain" id="PRO_0000083407" description="GATA-binding factor 2">
    <location>
        <begin position="1"/>
        <end position="452"/>
    </location>
</feature>
<feature type="zinc finger region" description="GATA-type 1" evidence="1">
    <location>
        <begin position="267"/>
        <end position="291"/>
    </location>
</feature>
<feature type="zinc finger region" description="GATA-type 2" evidence="1">
    <location>
        <begin position="321"/>
        <end position="345"/>
    </location>
</feature>
<feature type="region of interest" description="Disordered" evidence="2">
    <location>
        <begin position="130"/>
        <end position="182"/>
    </location>
</feature>
<feature type="region of interest" description="Disordered" evidence="2">
    <location>
        <begin position="426"/>
        <end position="452"/>
    </location>
</feature>
<feature type="compositionally biased region" description="Low complexity" evidence="2">
    <location>
        <begin position="139"/>
        <end position="151"/>
    </location>
</feature>
<feature type="compositionally biased region" description="Pro residues" evidence="2">
    <location>
        <begin position="156"/>
        <end position="172"/>
    </location>
</feature>
<feature type="compositionally biased region" description="Polar residues" evidence="2">
    <location>
        <begin position="426"/>
        <end position="438"/>
    </location>
</feature>
<evidence type="ECO:0000255" key="1">
    <source>
        <dbReference type="PROSITE-ProRule" id="PRU00094"/>
    </source>
</evidence>
<evidence type="ECO:0000256" key="2">
    <source>
        <dbReference type="SAM" id="MobiDB-lite"/>
    </source>
</evidence>
<evidence type="ECO:0000269" key="3">
    <source>
    </source>
</evidence>
<comment type="subcellular location">
    <subcellularLocation>
        <location>Nucleus</location>
    </subcellularLocation>
</comment>
<comment type="tissue specificity">
    <text evidence="3">Expressed in the developing ventral blood island, and in the embryonic nervous system.</text>
</comment>
<comment type="developmental stage">
    <text evidence="3">Expressed both maternally and zygotically. Expressed at a low level maternally, and abundantly expressed at stage 11 (mid-gastrula) and thereafter.</text>
</comment>
<keyword id="KW-0010">Activator</keyword>
<keyword id="KW-0238">DNA-binding</keyword>
<keyword id="KW-0479">Metal-binding</keyword>
<keyword id="KW-0539">Nucleus</keyword>
<keyword id="KW-1185">Reference proteome</keyword>
<keyword id="KW-0677">Repeat</keyword>
<keyword id="KW-0804">Transcription</keyword>
<keyword id="KW-0805">Transcription regulation</keyword>
<keyword id="KW-0862">Zinc</keyword>
<keyword id="KW-0863">Zinc-finger</keyword>
<protein>
    <recommendedName>
        <fullName>GATA-binding factor 2</fullName>
        <shortName>GATA-2</shortName>
    </recommendedName>
    <alternativeName>
        <fullName>Transcription factor xGATA-2</fullName>
    </alternativeName>
</protein>